<dbReference type="EC" id="2.1.2.3" evidence="1"/>
<dbReference type="EC" id="3.5.4.10" evidence="1"/>
<dbReference type="EMBL" id="AB045609">
    <property type="protein sequence ID" value="BAB20827.1"/>
    <property type="molecule type" value="Genomic_DNA"/>
</dbReference>
<dbReference type="RefSeq" id="WP_002935323.1">
    <property type="nucleotide sequence ID" value="NZ_WCIZ01000017.1"/>
</dbReference>
<dbReference type="SMR" id="Q9F1T4"/>
<dbReference type="STRING" id="1321372.GCA_000478745_01777"/>
<dbReference type="eggNOG" id="COG0138">
    <property type="taxonomic scope" value="Bacteria"/>
</dbReference>
<dbReference type="OrthoDB" id="9802065at2"/>
<dbReference type="UniPathway" id="UPA00074">
    <property type="reaction ID" value="UER00133"/>
</dbReference>
<dbReference type="UniPathway" id="UPA00074">
    <property type="reaction ID" value="UER00135"/>
</dbReference>
<dbReference type="GO" id="GO:0005829">
    <property type="term" value="C:cytosol"/>
    <property type="evidence" value="ECO:0007669"/>
    <property type="project" value="TreeGrafter"/>
</dbReference>
<dbReference type="GO" id="GO:0003937">
    <property type="term" value="F:IMP cyclohydrolase activity"/>
    <property type="evidence" value="ECO:0007669"/>
    <property type="project" value="UniProtKB-UniRule"/>
</dbReference>
<dbReference type="GO" id="GO:0004643">
    <property type="term" value="F:phosphoribosylaminoimidazolecarboxamide formyltransferase activity"/>
    <property type="evidence" value="ECO:0007669"/>
    <property type="project" value="UniProtKB-UniRule"/>
</dbReference>
<dbReference type="GO" id="GO:0006189">
    <property type="term" value="P:'de novo' IMP biosynthetic process"/>
    <property type="evidence" value="ECO:0007669"/>
    <property type="project" value="UniProtKB-UniRule"/>
</dbReference>
<dbReference type="CDD" id="cd01421">
    <property type="entry name" value="IMPCH"/>
    <property type="match status" value="1"/>
</dbReference>
<dbReference type="FunFam" id="3.40.140.20:FF:000001">
    <property type="entry name" value="Bifunctional purine biosynthesis protein PurH"/>
    <property type="match status" value="1"/>
</dbReference>
<dbReference type="FunFam" id="3.40.140.20:FF:000002">
    <property type="entry name" value="Bifunctional purine biosynthesis protein PurH"/>
    <property type="match status" value="1"/>
</dbReference>
<dbReference type="FunFam" id="3.40.50.1380:FF:000001">
    <property type="entry name" value="Bifunctional purine biosynthesis protein PurH"/>
    <property type="match status" value="1"/>
</dbReference>
<dbReference type="Gene3D" id="3.40.140.20">
    <property type="match status" value="2"/>
</dbReference>
<dbReference type="Gene3D" id="3.40.50.1380">
    <property type="entry name" value="Methylglyoxal synthase-like domain"/>
    <property type="match status" value="1"/>
</dbReference>
<dbReference type="HAMAP" id="MF_00139">
    <property type="entry name" value="PurH"/>
    <property type="match status" value="1"/>
</dbReference>
<dbReference type="InterPro" id="IPR024051">
    <property type="entry name" value="AICAR_Tfase_dup_dom_sf"/>
</dbReference>
<dbReference type="InterPro" id="IPR016193">
    <property type="entry name" value="Cytidine_deaminase-like"/>
</dbReference>
<dbReference type="InterPro" id="IPR011607">
    <property type="entry name" value="MGS-like_dom"/>
</dbReference>
<dbReference type="InterPro" id="IPR036914">
    <property type="entry name" value="MGS-like_dom_sf"/>
</dbReference>
<dbReference type="InterPro" id="IPR002695">
    <property type="entry name" value="PurH-like"/>
</dbReference>
<dbReference type="NCBIfam" id="NF002049">
    <property type="entry name" value="PRK00881.1"/>
    <property type="match status" value="1"/>
</dbReference>
<dbReference type="NCBIfam" id="TIGR00355">
    <property type="entry name" value="purH"/>
    <property type="match status" value="1"/>
</dbReference>
<dbReference type="PANTHER" id="PTHR11692:SF0">
    <property type="entry name" value="BIFUNCTIONAL PURINE BIOSYNTHESIS PROTEIN ATIC"/>
    <property type="match status" value="1"/>
</dbReference>
<dbReference type="PANTHER" id="PTHR11692">
    <property type="entry name" value="BIFUNCTIONAL PURINE BIOSYNTHESIS PROTEIN PURH"/>
    <property type="match status" value="1"/>
</dbReference>
<dbReference type="Pfam" id="PF01808">
    <property type="entry name" value="AICARFT_IMPCHas"/>
    <property type="match status" value="1"/>
</dbReference>
<dbReference type="Pfam" id="PF02142">
    <property type="entry name" value="MGS"/>
    <property type="match status" value="1"/>
</dbReference>
<dbReference type="PIRSF" id="PIRSF000414">
    <property type="entry name" value="AICARFT_IMPCHas"/>
    <property type="match status" value="1"/>
</dbReference>
<dbReference type="SMART" id="SM00798">
    <property type="entry name" value="AICARFT_IMPCHas"/>
    <property type="match status" value="1"/>
</dbReference>
<dbReference type="SMART" id="SM00851">
    <property type="entry name" value="MGS"/>
    <property type="match status" value="1"/>
</dbReference>
<dbReference type="SUPFAM" id="SSF53927">
    <property type="entry name" value="Cytidine deaminase-like"/>
    <property type="match status" value="1"/>
</dbReference>
<dbReference type="SUPFAM" id="SSF52335">
    <property type="entry name" value="Methylglyoxal synthase-like"/>
    <property type="match status" value="1"/>
</dbReference>
<dbReference type="PROSITE" id="PS51855">
    <property type="entry name" value="MGS"/>
    <property type="match status" value="1"/>
</dbReference>
<protein>
    <recommendedName>
        <fullName evidence="1">Bifunctional purine biosynthesis protein PurH</fullName>
    </recommendedName>
    <domain>
        <recommendedName>
            <fullName evidence="1">Phosphoribosylaminoimidazolecarboxamide formyltransferase</fullName>
            <ecNumber evidence="1">2.1.2.3</ecNumber>
        </recommendedName>
        <alternativeName>
            <fullName evidence="1">AICAR transformylase</fullName>
        </alternativeName>
    </domain>
    <domain>
        <recommendedName>
            <fullName evidence="1">IMP cyclohydrolase</fullName>
            <ecNumber evidence="1">3.5.4.10</ecNumber>
        </recommendedName>
        <alternativeName>
            <fullName evidence="1">ATIC</fullName>
        </alternativeName>
        <alternativeName>
            <fullName evidence="1">IMP synthase</fullName>
        </alternativeName>
        <alternativeName>
            <fullName evidence="1">Inosinicase</fullName>
        </alternativeName>
    </domain>
</protein>
<name>PUR9_STRSU</name>
<evidence type="ECO:0000255" key="1">
    <source>
        <dbReference type="HAMAP-Rule" id="MF_00139"/>
    </source>
</evidence>
<evidence type="ECO:0000255" key="2">
    <source>
        <dbReference type="PROSITE-ProRule" id="PRU01202"/>
    </source>
</evidence>
<accession>Q9F1T4</accession>
<proteinExistence type="inferred from homology"/>
<gene>
    <name evidence="1" type="primary">purH</name>
</gene>
<organism>
    <name type="scientific">Streptococcus suis</name>
    <dbReference type="NCBI Taxonomy" id="1307"/>
    <lineage>
        <taxon>Bacteria</taxon>
        <taxon>Bacillati</taxon>
        <taxon>Bacillota</taxon>
        <taxon>Bacilli</taxon>
        <taxon>Lactobacillales</taxon>
        <taxon>Streptococcaceae</taxon>
        <taxon>Streptococcus</taxon>
    </lineage>
</organism>
<comment type="catalytic activity">
    <reaction evidence="1">
        <text>(6R)-10-formyltetrahydrofolate + 5-amino-1-(5-phospho-beta-D-ribosyl)imidazole-4-carboxamide = 5-formamido-1-(5-phospho-D-ribosyl)imidazole-4-carboxamide + (6S)-5,6,7,8-tetrahydrofolate</text>
        <dbReference type="Rhea" id="RHEA:22192"/>
        <dbReference type="ChEBI" id="CHEBI:57453"/>
        <dbReference type="ChEBI" id="CHEBI:58467"/>
        <dbReference type="ChEBI" id="CHEBI:58475"/>
        <dbReference type="ChEBI" id="CHEBI:195366"/>
        <dbReference type="EC" id="2.1.2.3"/>
    </reaction>
</comment>
<comment type="catalytic activity">
    <reaction evidence="1">
        <text>IMP + H2O = 5-formamido-1-(5-phospho-D-ribosyl)imidazole-4-carboxamide</text>
        <dbReference type="Rhea" id="RHEA:18445"/>
        <dbReference type="ChEBI" id="CHEBI:15377"/>
        <dbReference type="ChEBI" id="CHEBI:58053"/>
        <dbReference type="ChEBI" id="CHEBI:58467"/>
        <dbReference type="EC" id="3.5.4.10"/>
    </reaction>
</comment>
<comment type="pathway">
    <text evidence="1">Purine metabolism; IMP biosynthesis via de novo pathway; 5-formamido-1-(5-phospho-D-ribosyl)imidazole-4-carboxamide from 5-amino-1-(5-phospho-D-ribosyl)imidazole-4-carboxamide (10-formyl THF route): step 1/1.</text>
</comment>
<comment type="pathway">
    <text evidence="1">Purine metabolism; IMP biosynthesis via de novo pathway; IMP from 5-formamido-1-(5-phospho-D-ribosyl)imidazole-4-carboxamide: step 1/1.</text>
</comment>
<comment type="domain">
    <text evidence="1">The IMP cyclohydrolase activity resides in the N-terminal region.</text>
</comment>
<comment type="similarity">
    <text evidence="1">Belongs to the PurH family.</text>
</comment>
<reference key="1">
    <citation type="journal article" date="2001" name="J. Bacteriol.">
        <title>Evidence for horizontal transfer of the SsuDAT1I restriction-modification genes to the Streptococcus suis genome.</title>
        <authorList>
            <person name="Sekizaki T."/>
            <person name="Otani Y."/>
            <person name="Osaki M."/>
            <person name="Takamatsu D."/>
            <person name="Shimoji Y."/>
        </authorList>
    </citation>
    <scope>NUCLEOTIDE SEQUENCE [GENOMIC DNA]</scope>
    <source>
        <strain>DAT1 / Serotype 2</strain>
    </source>
</reference>
<feature type="chain" id="PRO_0000192139" description="Bifunctional purine biosynthesis protein PurH">
    <location>
        <begin position="1"/>
        <end position="515"/>
    </location>
</feature>
<feature type="domain" description="MGS-like" evidence="2">
    <location>
        <begin position="1"/>
        <end position="145"/>
    </location>
</feature>
<sequence length="515" mass="56511">MTKRALISVSDKNGIVEFAQELTKFGWEIISTGGTKVALDQAGVTTIAIDDVTGFPEMMDGRVKTLHPKIHGGLLARRDLDSHLQAANDHEIGLIDLVVVNLYPFKETILRPDVTYDLAVENIDIGGPSMLRSAAKNHASVTVVVDPADYPTVLGEIAEQGETSYATRQRLAAKVFRHTAAYDALIADYFTKQVGEDKPEKLTITYDLNQPMRYGENPQQNADFYQNALPTAYSIAAAKQLNGKELSFNNIRDADAAIRIIRDFKDRPTVVALKHMNPCGIGQAETIEQAWDYAYEADPVSIFGGIVVLNREVDAATAEKMHPIFLEIIIAPGYSAEALAILTNKKKNLRILELAFDAQDASEVEKEFTGVVGGLLVQDQDVVVESPVDWQVVTERQPSEQEWAAMEFAWKSSKYVKSNGIIITNDKMTLGVGPGQTNRVASVRIAIEQAKDRLEGAVLASDAFFPFADNVEEIAAAGIKAIIQPGGSVRDQDSIDMANKYGLTMVFTGVRHFRH</sequence>
<keyword id="KW-0378">Hydrolase</keyword>
<keyword id="KW-0511">Multifunctional enzyme</keyword>
<keyword id="KW-0658">Purine biosynthesis</keyword>
<keyword id="KW-0808">Transferase</keyword>